<comment type="function">
    <text evidence="1">Catalyzes the formation of the alpha-1,6-glucosidic linkages in glycogen by scission of a 1,4-alpha-linked oligosaccharide from growing alpha-1,4-glucan chains and the subsequent attachment of the oligosaccharide to the alpha-1,6 position.</text>
</comment>
<comment type="catalytic activity">
    <reaction evidence="1">
        <text>Transfers a segment of a (1-&gt;4)-alpha-D-glucan chain to a primary hydroxy group in a similar glucan chain.</text>
        <dbReference type="EC" id="2.4.1.18"/>
    </reaction>
</comment>
<comment type="pathway">
    <text evidence="1">Glycan biosynthesis; glycogen biosynthesis.</text>
</comment>
<comment type="subunit">
    <text evidence="1">Monomer.</text>
</comment>
<comment type="similarity">
    <text evidence="1">Belongs to the glycosyl hydrolase 13 family. GlgB subfamily.</text>
</comment>
<dbReference type="EC" id="2.4.1.18" evidence="1"/>
<dbReference type="EMBL" id="BA000030">
    <property type="protein sequence ID" value="BAC70516.1"/>
    <property type="molecule type" value="Genomic_DNA"/>
</dbReference>
<dbReference type="SMR" id="Q82JF0"/>
<dbReference type="CAZy" id="CBM48">
    <property type="family name" value="Carbohydrate-Binding Module Family 48"/>
</dbReference>
<dbReference type="CAZy" id="GH13">
    <property type="family name" value="Glycoside Hydrolase Family 13"/>
</dbReference>
<dbReference type="KEGG" id="sma:SAVERM_2805"/>
<dbReference type="eggNOG" id="COG0296">
    <property type="taxonomic scope" value="Bacteria"/>
</dbReference>
<dbReference type="HOGENOM" id="CLU_004245_3_2_11"/>
<dbReference type="OrthoDB" id="9800174at2"/>
<dbReference type="BRENDA" id="2.4.1.18">
    <property type="organism ID" value="5980"/>
</dbReference>
<dbReference type="UniPathway" id="UPA00164"/>
<dbReference type="Proteomes" id="UP000000428">
    <property type="component" value="Chromosome"/>
</dbReference>
<dbReference type="GO" id="GO:0005829">
    <property type="term" value="C:cytosol"/>
    <property type="evidence" value="ECO:0007669"/>
    <property type="project" value="TreeGrafter"/>
</dbReference>
<dbReference type="GO" id="GO:0003844">
    <property type="term" value="F:1,4-alpha-glucan branching enzyme activity"/>
    <property type="evidence" value="ECO:0007669"/>
    <property type="project" value="UniProtKB-UniRule"/>
</dbReference>
<dbReference type="GO" id="GO:0043169">
    <property type="term" value="F:cation binding"/>
    <property type="evidence" value="ECO:0007669"/>
    <property type="project" value="InterPro"/>
</dbReference>
<dbReference type="GO" id="GO:0004553">
    <property type="term" value="F:hydrolase activity, hydrolyzing O-glycosyl compounds"/>
    <property type="evidence" value="ECO:0007669"/>
    <property type="project" value="InterPro"/>
</dbReference>
<dbReference type="GO" id="GO:0005978">
    <property type="term" value="P:glycogen biosynthetic process"/>
    <property type="evidence" value="ECO:0007669"/>
    <property type="project" value="UniProtKB-UniRule"/>
</dbReference>
<dbReference type="CDD" id="cd11322">
    <property type="entry name" value="AmyAc_Glg_BE"/>
    <property type="match status" value="1"/>
</dbReference>
<dbReference type="CDD" id="cd02855">
    <property type="entry name" value="E_set_GBE_prok_N"/>
    <property type="match status" value="1"/>
</dbReference>
<dbReference type="FunFam" id="2.60.40.10:FF:000169">
    <property type="entry name" value="1,4-alpha-glucan branching enzyme GlgB"/>
    <property type="match status" value="1"/>
</dbReference>
<dbReference type="FunFam" id="2.60.40.1180:FF:000002">
    <property type="entry name" value="1,4-alpha-glucan branching enzyme GlgB"/>
    <property type="match status" value="1"/>
</dbReference>
<dbReference type="FunFam" id="3.20.20.80:FF:000003">
    <property type="entry name" value="1,4-alpha-glucan branching enzyme GlgB"/>
    <property type="match status" value="1"/>
</dbReference>
<dbReference type="Gene3D" id="3.20.20.80">
    <property type="entry name" value="Glycosidases"/>
    <property type="match status" value="1"/>
</dbReference>
<dbReference type="Gene3D" id="2.60.40.1180">
    <property type="entry name" value="Golgi alpha-mannosidase II"/>
    <property type="match status" value="1"/>
</dbReference>
<dbReference type="Gene3D" id="2.60.40.10">
    <property type="entry name" value="Immunoglobulins"/>
    <property type="match status" value="2"/>
</dbReference>
<dbReference type="HAMAP" id="MF_00685">
    <property type="entry name" value="GlgB"/>
    <property type="match status" value="1"/>
</dbReference>
<dbReference type="InterPro" id="IPR006048">
    <property type="entry name" value="A-amylase/branching_C"/>
</dbReference>
<dbReference type="InterPro" id="IPR037439">
    <property type="entry name" value="Branching_enzy"/>
</dbReference>
<dbReference type="InterPro" id="IPR006407">
    <property type="entry name" value="GlgB"/>
</dbReference>
<dbReference type="InterPro" id="IPR054169">
    <property type="entry name" value="GlgB_N"/>
</dbReference>
<dbReference type="InterPro" id="IPR044143">
    <property type="entry name" value="GlgB_N_E_set_prok"/>
</dbReference>
<dbReference type="InterPro" id="IPR006047">
    <property type="entry name" value="Glyco_hydro_13_cat_dom"/>
</dbReference>
<dbReference type="InterPro" id="IPR004193">
    <property type="entry name" value="Glyco_hydro_13_N"/>
</dbReference>
<dbReference type="InterPro" id="IPR013780">
    <property type="entry name" value="Glyco_hydro_b"/>
</dbReference>
<dbReference type="InterPro" id="IPR017853">
    <property type="entry name" value="Glycoside_hydrolase_SF"/>
</dbReference>
<dbReference type="InterPro" id="IPR013783">
    <property type="entry name" value="Ig-like_fold"/>
</dbReference>
<dbReference type="InterPro" id="IPR014756">
    <property type="entry name" value="Ig_E-set"/>
</dbReference>
<dbReference type="NCBIfam" id="TIGR01515">
    <property type="entry name" value="branching_enzym"/>
    <property type="match status" value="1"/>
</dbReference>
<dbReference type="NCBIfam" id="NF003811">
    <property type="entry name" value="PRK05402.1"/>
    <property type="match status" value="1"/>
</dbReference>
<dbReference type="NCBIfam" id="NF008967">
    <property type="entry name" value="PRK12313.1"/>
    <property type="match status" value="1"/>
</dbReference>
<dbReference type="PANTHER" id="PTHR43651">
    <property type="entry name" value="1,4-ALPHA-GLUCAN-BRANCHING ENZYME"/>
    <property type="match status" value="1"/>
</dbReference>
<dbReference type="PANTHER" id="PTHR43651:SF3">
    <property type="entry name" value="1,4-ALPHA-GLUCAN-BRANCHING ENZYME"/>
    <property type="match status" value="1"/>
</dbReference>
<dbReference type="Pfam" id="PF00128">
    <property type="entry name" value="Alpha-amylase"/>
    <property type="match status" value="2"/>
</dbReference>
<dbReference type="Pfam" id="PF02806">
    <property type="entry name" value="Alpha-amylase_C"/>
    <property type="match status" value="1"/>
</dbReference>
<dbReference type="Pfam" id="PF02922">
    <property type="entry name" value="CBM_48"/>
    <property type="match status" value="1"/>
</dbReference>
<dbReference type="Pfam" id="PF22019">
    <property type="entry name" value="GlgB_N"/>
    <property type="match status" value="1"/>
</dbReference>
<dbReference type="PIRSF" id="PIRSF000463">
    <property type="entry name" value="GlgB"/>
    <property type="match status" value="1"/>
</dbReference>
<dbReference type="SMART" id="SM00642">
    <property type="entry name" value="Aamy"/>
    <property type="match status" value="1"/>
</dbReference>
<dbReference type="SUPFAM" id="SSF51445">
    <property type="entry name" value="(Trans)glycosidases"/>
    <property type="match status" value="1"/>
</dbReference>
<dbReference type="SUPFAM" id="SSF81296">
    <property type="entry name" value="E set domains"/>
    <property type="match status" value="1"/>
</dbReference>
<dbReference type="SUPFAM" id="SSF51011">
    <property type="entry name" value="Glycosyl hydrolase domain"/>
    <property type="match status" value="1"/>
</dbReference>
<evidence type="ECO:0000255" key="1">
    <source>
        <dbReference type="HAMAP-Rule" id="MF_00685"/>
    </source>
</evidence>
<evidence type="ECO:0000256" key="2">
    <source>
        <dbReference type="SAM" id="MobiDB-lite"/>
    </source>
</evidence>
<organism>
    <name type="scientific">Streptomyces avermitilis (strain ATCC 31267 / DSM 46492 / JCM 5070 / NBRC 14893 / NCIMB 12804 / NRRL 8165 / MA-4680)</name>
    <dbReference type="NCBI Taxonomy" id="227882"/>
    <lineage>
        <taxon>Bacteria</taxon>
        <taxon>Bacillati</taxon>
        <taxon>Actinomycetota</taxon>
        <taxon>Actinomycetes</taxon>
        <taxon>Kitasatosporales</taxon>
        <taxon>Streptomycetaceae</taxon>
        <taxon>Streptomyces</taxon>
    </lineage>
</organism>
<feature type="chain" id="PRO_0000188747" description="1,4-alpha-glucan branching enzyme GlgB 1">
    <location>
        <begin position="1"/>
        <end position="838"/>
    </location>
</feature>
<feature type="region of interest" description="Disordered" evidence="2">
    <location>
        <begin position="1"/>
        <end position="98"/>
    </location>
</feature>
<feature type="region of interest" description="Disordered" evidence="2">
    <location>
        <begin position="116"/>
        <end position="142"/>
    </location>
</feature>
<feature type="region of interest" description="Disordered" evidence="2">
    <location>
        <begin position="793"/>
        <end position="822"/>
    </location>
</feature>
<feature type="compositionally biased region" description="Basic and acidic residues" evidence="2">
    <location>
        <begin position="1"/>
        <end position="11"/>
    </location>
</feature>
<feature type="compositionally biased region" description="Low complexity" evidence="2">
    <location>
        <begin position="29"/>
        <end position="57"/>
    </location>
</feature>
<feature type="active site" description="Nucleophile" evidence="1">
    <location>
        <position position="513"/>
    </location>
</feature>
<feature type="active site" description="Proton donor" evidence="1">
    <location>
        <position position="566"/>
    </location>
</feature>
<proteinExistence type="inferred from homology"/>
<keyword id="KW-0119">Carbohydrate metabolism</keyword>
<keyword id="KW-0320">Glycogen biosynthesis</keyword>
<keyword id="KW-0321">Glycogen metabolism</keyword>
<keyword id="KW-0328">Glycosyltransferase</keyword>
<keyword id="KW-1185">Reference proteome</keyword>
<keyword id="KW-0808">Transferase</keyword>
<name>GLGB1_STRAW</name>
<protein>
    <recommendedName>
        <fullName evidence="1">1,4-alpha-glucan branching enzyme GlgB 1</fullName>
        <ecNumber evidence="1">2.4.1.18</ecNumber>
    </recommendedName>
    <alternativeName>
        <fullName evidence="1">1,4-alpha-D-glucan:1,4-alpha-D-glucan 6-glucosyl-transferase 1</fullName>
    </alternativeName>
    <alternativeName>
        <fullName evidence="1">Alpha-(1-&gt;4)-glucan branching enzyme 1</fullName>
    </alternativeName>
    <alternativeName>
        <fullName evidence="1">Glycogen branching enzyme 1</fullName>
        <shortName evidence="1">BE 1</shortName>
    </alternativeName>
</protein>
<gene>
    <name evidence="1" type="primary">glgB1</name>
    <name type="ordered locus">SAV_2805</name>
</gene>
<sequence>MIPRPPSDDRANQNGDGSKKTGAKKTGAKKAAAAKKTAGKKATPAAKATAAKGAVTKKTGKGKATAKKAVADKAAAKATVPQQAVPKQAVSKRAVSKKAVPRKAVVKAALDIPEAPVSPAVAPDDRDRLLSGTHHAPHSVLGAHPVPGGVAFRVLRPYALSVTVVTDDLRTELHDDGAGFFTGLLPLRAVPDYRLHVAYEGTVHETEDAYRFLPALGELDLHLINEGRHEELWTALGAEPMTHQGVPGTRFTVWAPNARGVRLAGTFNFWDATAFPLRSLGSSGVWELFVPGVGEGELYKFEITRPDGSKTLRADPVARRTEAPPRTSSIVHASHYAWADEAWMAARGERPVHESPFSVYEVHLPSWRPGLTYRQLAEQLPAYVADLGFTHVELLPVAEHPFGGSWGYQVTGFYAPTARLGTPDDFKYLVDALHRAGVGVLMDWVPAHFPRDDWALAEFDGRPLYEHEDPLRAAHPDWGTLEFDYGRREVRNFLVANAVYWCEEFHIDGLRVDAVASMLYLDYSREEGQWSPNEFGGRENLDAVAFLQEMNATVYRRVPGVVTIAEESTAWEGVTRATHDNGLGFGLKWNMGWMHDSLGYVQHEPVHRRFHHHEMTFSMVYAYSENYVLPISHDEVVHGKGSLVSKMPGDWWQQRATERAYLGFMWAHPGKQLLFMGQEFAQGAEWSETHGPDWWLLDPAYGAEPDHRGMRDLVRDLNTVYRHEPALWERDTDPSGFAWVTGDAVEDNVFAFLRHAADGTPLLAVSNFSPVVRHDYRLGVPDDIPAWHETLNTDGARYGGSDVTNPHPVKPEPQGRHGRPASIRLTLPPLSTLWLRPA</sequence>
<reference key="1">
    <citation type="journal article" date="2001" name="Proc. Natl. Acad. Sci. U.S.A.">
        <title>Genome sequence of an industrial microorganism Streptomyces avermitilis: deducing the ability of producing secondary metabolites.</title>
        <authorList>
            <person name="Omura S."/>
            <person name="Ikeda H."/>
            <person name="Ishikawa J."/>
            <person name="Hanamoto A."/>
            <person name="Takahashi C."/>
            <person name="Shinose M."/>
            <person name="Takahashi Y."/>
            <person name="Horikawa H."/>
            <person name="Nakazawa H."/>
            <person name="Osonoe T."/>
            <person name="Kikuchi H."/>
            <person name="Shiba T."/>
            <person name="Sakaki Y."/>
            <person name="Hattori M."/>
        </authorList>
    </citation>
    <scope>NUCLEOTIDE SEQUENCE [LARGE SCALE GENOMIC DNA]</scope>
    <source>
        <strain>ATCC 31267 / DSM 46492 / JCM 5070 / NBRC 14893 / NCIMB 12804 / NRRL 8165 / MA-4680</strain>
    </source>
</reference>
<reference key="2">
    <citation type="journal article" date="2003" name="Nat. Biotechnol.">
        <title>Complete genome sequence and comparative analysis of the industrial microorganism Streptomyces avermitilis.</title>
        <authorList>
            <person name="Ikeda H."/>
            <person name="Ishikawa J."/>
            <person name="Hanamoto A."/>
            <person name="Shinose M."/>
            <person name="Kikuchi H."/>
            <person name="Shiba T."/>
            <person name="Sakaki Y."/>
            <person name="Hattori M."/>
            <person name="Omura S."/>
        </authorList>
    </citation>
    <scope>NUCLEOTIDE SEQUENCE [LARGE SCALE GENOMIC DNA]</scope>
    <source>
        <strain>ATCC 31267 / DSM 46492 / JCM 5070 / NBRC 14893 / NCIMB 12804 / NRRL 8165 / MA-4680</strain>
    </source>
</reference>
<accession>Q82JF0</accession>